<reference key="1">
    <citation type="journal article" date="2016" name="J. Biotechnol.">
        <title>Draft genome sequence of Talaromyces verruculosus ('Penicillium verruculosum') strain TS63-9, a fungus with great potential for industrial production of polysaccharide-degrading enzymes.</title>
        <authorList>
            <person name="Hu L."/>
            <person name="Taujale R."/>
            <person name="Liu F."/>
            <person name="Song J."/>
            <person name="Yin Q."/>
            <person name="Zhang Y."/>
            <person name="Guo J."/>
            <person name="Yin Y."/>
        </authorList>
    </citation>
    <scope>NUCLEOTIDE SEQUENCE [LARGE SCALE GENOMIC DNA]</scope>
    <source>
        <strain>TS63-9</strain>
    </source>
</reference>
<reference key="2">
    <citation type="journal article" date="2022" name="Nature">
        <title>Discovery of non-squalene triterpenes.</title>
        <authorList>
            <person name="Tao H."/>
            <person name="Lauterbach L."/>
            <person name="Bian G."/>
            <person name="Chen R."/>
            <person name="Hou A."/>
            <person name="Mori T."/>
            <person name="Cheng S."/>
            <person name="Hu B."/>
            <person name="Lu L."/>
            <person name="Mu X."/>
            <person name="Li M."/>
            <person name="Adachi N."/>
            <person name="Kawasaki M."/>
            <person name="Moriya T."/>
            <person name="Senda T."/>
            <person name="Wang X."/>
            <person name="Deng Z."/>
            <person name="Abe I."/>
            <person name="Dickschat J.S."/>
            <person name="Liu T."/>
        </authorList>
    </citation>
    <scope>X-RAY CRYSTALLOGRAPHY (2.0 ANGSTROMS) OF 1-328</scope>
    <scope>FUNCTION</scope>
    <scope>CATALYTIC ACTIVITY</scope>
    <scope>DOMAIN</scope>
</reference>
<sequence>MDFKYSRELKLESLDALNLTEGIPLRVNENIDLEFRGIERAHSDWERYVGKLNGFHGGRGPQFGFVSACIPECLPERMETVSYANEFAFLHDDMTDAASKDQVNGLNDDLLGGLDFTTEARSSASGKQQMQAKLLLEMLSIDRERTMVTIKAWADFMRGAAGRDHHRGFSSLDEYIPYRCADCGEKFWFGLVTFAMALSIPEQELELVQRLAQNAYLAAGLTNDLYSYEKEQLVAERSGTGQVFNAIAVIMQEHSVSISEAEDICRGRIREYAAKYVRDVADLRAKNELSRDSLAYLETGLYGISGSTAWNLDCPRYQVSTFVDFKTPEDETAKEEFIHVPEQKQFVGDGSIEDQTTEGNQEIVLRKLPQMSTEVIEAPYTYVKSLPSKGVRQRAMHAINTWLQVPMAKMKLIEDVVERIHNSSLMLDDIEDSSPLRREYPAAHMIFGVPQTINSANYELVLALNAAHQLGNPTCLQIFIEELQRLNVGQSYDLYWTHNMITPSMNDYLRMIDSKTGGLFSMLSRLMVACSPRTVSADFDSLSRLVGRFFQIRDDYQNLVSAEYSKQKGFCEDLDEGKYSLPLIHALETCVNSDRDMLRSLLVQRRVAGHLTFEQKKLVLQIMQRCESLEFTKSQLCVLQTRIQEEIDKLVAEFGDENFSLRLLVELLVVG</sequence>
<proteinExistence type="evidence at protein level"/>
<feature type="chain" id="PRO_0000457804" description="Talaropentaene synthase">
    <location>
        <begin position="1"/>
        <end position="671"/>
    </location>
</feature>
<feature type="short sequence motif" description="DDXXD 1" evidence="1">
    <location>
        <begin position="92"/>
        <end position="96"/>
    </location>
</feature>
<feature type="short sequence motif" description="NSE/DTE" evidence="1">
    <location>
        <begin position="223"/>
        <end position="231"/>
    </location>
</feature>
<feature type="short sequence motif" description="DDXXD 2" evidence="1">
    <location>
        <begin position="428"/>
        <end position="432"/>
    </location>
</feature>
<feature type="binding site" evidence="4">
    <location>
        <position position="92"/>
    </location>
    <ligand>
        <name>Mg(2+)</name>
        <dbReference type="ChEBI" id="CHEBI:18420"/>
        <label>1</label>
    </ligand>
</feature>
<feature type="binding site" evidence="4">
    <location>
        <position position="92"/>
    </location>
    <ligand>
        <name>Mg(2+)</name>
        <dbReference type="ChEBI" id="CHEBI:18420"/>
        <label>2</label>
    </ligand>
</feature>
<feature type="binding site" evidence="3">
    <location>
        <position position="389"/>
    </location>
    <ligand>
        <name>isopentenyl diphosphate</name>
        <dbReference type="ChEBI" id="CHEBI:128769"/>
    </ligand>
</feature>
<feature type="binding site" evidence="3">
    <location>
        <position position="392"/>
    </location>
    <ligand>
        <name>isopentenyl diphosphate</name>
        <dbReference type="ChEBI" id="CHEBI:128769"/>
    </ligand>
</feature>
<feature type="binding site" evidence="3">
    <location>
        <position position="421"/>
    </location>
    <ligand>
        <name>isopentenyl diphosphate</name>
        <dbReference type="ChEBI" id="CHEBI:128769"/>
    </ligand>
</feature>
<feature type="binding site" evidence="3">
    <location>
        <position position="428"/>
    </location>
    <ligand>
        <name>Mg(2+)</name>
        <dbReference type="ChEBI" id="CHEBI:18420"/>
        <label>3</label>
    </ligand>
</feature>
<feature type="binding site" evidence="3">
    <location>
        <position position="428"/>
    </location>
    <ligand>
        <name>Mg(2+)</name>
        <dbReference type="ChEBI" id="CHEBI:18420"/>
        <label>4</label>
    </ligand>
</feature>
<feature type="binding site" evidence="3">
    <location>
        <position position="432"/>
    </location>
    <ligand>
        <name>Mg(2+)</name>
        <dbReference type="ChEBI" id="CHEBI:18420"/>
        <label>3</label>
    </ligand>
</feature>
<feature type="binding site" evidence="3">
    <location>
        <position position="432"/>
    </location>
    <ligand>
        <name>Mg(2+)</name>
        <dbReference type="ChEBI" id="CHEBI:18420"/>
        <label>4</label>
    </ligand>
</feature>
<feature type="binding site" evidence="3">
    <location>
        <position position="437"/>
    </location>
    <ligand>
        <name>dimethylallyl diphosphate</name>
        <dbReference type="ChEBI" id="CHEBI:57623"/>
    </ligand>
</feature>
<feature type="binding site" evidence="3">
    <location>
        <position position="438"/>
    </location>
    <ligand>
        <name>isopentenyl diphosphate</name>
        <dbReference type="ChEBI" id="CHEBI:128769"/>
    </ligand>
</feature>
<feature type="binding site" evidence="3">
    <location>
        <position position="515"/>
    </location>
    <ligand>
        <name>dimethylallyl diphosphate</name>
        <dbReference type="ChEBI" id="CHEBI:57623"/>
    </ligand>
</feature>
<feature type="binding site" evidence="3">
    <location>
        <position position="516"/>
    </location>
    <ligand>
        <name>dimethylallyl diphosphate</name>
        <dbReference type="ChEBI" id="CHEBI:57623"/>
    </ligand>
</feature>
<feature type="binding site" evidence="3">
    <location>
        <position position="551"/>
    </location>
    <ligand>
        <name>dimethylallyl diphosphate</name>
        <dbReference type="ChEBI" id="CHEBI:57623"/>
    </ligand>
</feature>
<feature type="binding site" evidence="3">
    <location>
        <position position="558"/>
    </location>
    <ligand>
        <name>dimethylallyl diphosphate</name>
        <dbReference type="ChEBI" id="CHEBI:57623"/>
    </ligand>
</feature>
<feature type="binding site" evidence="3">
    <location>
        <position position="568"/>
    </location>
    <ligand>
        <name>dimethylallyl diphosphate</name>
        <dbReference type="ChEBI" id="CHEBI:57623"/>
    </ligand>
</feature>
<feature type="binding site" evidence="3">
    <location>
        <position position="578"/>
    </location>
    <ligand>
        <name>dimethylallyl diphosphate</name>
        <dbReference type="ChEBI" id="CHEBI:57623"/>
    </ligand>
</feature>
<keyword id="KW-0002">3D-structure</keyword>
<keyword id="KW-0414">Isoprene biosynthesis</keyword>
<keyword id="KW-0456">Lyase</keyword>
<keyword id="KW-0460">Magnesium</keyword>
<keyword id="KW-0479">Metal-binding</keyword>
<keyword id="KW-0511">Multifunctional enzyme</keyword>
<keyword id="KW-0677">Repeat</keyword>
<keyword id="KW-0808">Transferase</keyword>
<comment type="function">
    <text evidence="5">Bifunctional terpene synthase that converts dimethylallyl diphosphate (DMAPP) and isopentenyl diphosphate (IPP) into talaropentaene as a single product (PubMed:35650436). The C-terminal prenyltransferase (PT) domain of MpMS catalyzes formation of hexaprenyl diphosphate (HexPP), whereas the N-terminal terpene cyclase (TC) domain catalyzes the cyclization of HexPP to talaropentaene (PubMed:35650436).</text>
</comment>
<comment type="catalytic activity">
    <reaction evidence="5">
        <text>5 isopentenyl diphosphate + dimethylallyl diphosphate = all-trans-hexaprenyl diphosphate + 5 diphosphate</text>
        <dbReference type="Rhea" id="RHEA:77975"/>
        <dbReference type="ChEBI" id="CHEBI:33019"/>
        <dbReference type="ChEBI" id="CHEBI:57623"/>
        <dbReference type="ChEBI" id="CHEBI:58179"/>
        <dbReference type="ChEBI" id="CHEBI:128769"/>
        <dbReference type="EC" id="2.5.1.158"/>
    </reaction>
    <physiologicalReaction direction="left-to-right" evidence="5">
        <dbReference type="Rhea" id="RHEA:77976"/>
    </physiologicalReaction>
</comment>
<comment type="catalytic activity">
    <reaction evidence="5">
        <text>all-trans-hexaprenyl diphosphate = talaropentaene + diphosphate</text>
        <dbReference type="Rhea" id="RHEA:77971"/>
        <dbReference type="ChEBI" id="CHEBI:33019"/>
        <dbReference type="ChEBI" id="CHEBI:58179"/>
        <dbReference type="ChEBI" id="CHEBI:192978"/>
        <dbReference type="EC" id="4.2.3.220"/>
    </reaction>
    <physiologicalReaction direction="left-to-right" evidence="5">
        <dbReference type="Rhea" id="RHEA:77972"/>
    </physiologicalReaction>
</comment>
<comment type="cofactor">
    <cofactor evidence="2">
        <name>Mg(2+)</name>
        <dbReference type="ChEBI" id="CHEBI:18420"/>
    </cofactor>
</comment>
<comment type="domain">
    <text evidence="8">The conserved DDXXD motifs as well as the NSE/DTE motif are important for the catalytic activity, presumably through binding to Mg(2+).</text>
</comment>
<comment type="similarity">
    <text evidence="7">In the N-terminal section; belongs to the terpene synthase family.</text>
</comment>
<comment type="similarity">
    <text evidence="7">In the C-terminal section; belongs to the FPP/GGPP synthase family.</text>
</comment>
<name>TVTS_TALVE</name>
<protein>
    <recommendedName>
        <fullName evidence="6">Talaropentaene synthase</fullName>
        <shortName evidence="6">TvTS</shortName>
    </recommendedName>
    <domain>
        <recommendedName>
            <fullName evidence="6">Terpene cyclase</fullName>
            <ecNumber evidence="5">4.2.3.220</ecNumber>
        </recommendedName>
    </domain>
    <domain>
        <recommendedName>
            <fullName evidence="6">Hexaprenyl-diphosphate synthase</fullName>
            <shortName evidence="6">HexPP synthase</shortName>
            <ecNumber evidence="5">2.5.1.158</ecNumber>
        </recommendedName>
    </domain>
</protein>
<evidence type="ECO:0000250" key="1">
    <source>
        <dbReference type="UniProtKB" id="A0A0P0ZD79"/>
    </source>
</evidence>
<evidence type="ECO:0000250" key="2">
    <source>
        <dbReference type="UniProtKB" id="P9WEV7"/>
    </source>
</evidence>
<evidence type="ECO:0000250" key="3">
    <source>
        <dbReference type="UniProtKB" id="Q12051"/>
    </source>
</evidence>
<evidence type="ECO:0000250" key="4">
    <source>
        <dbReference type="UniProtKB" id="Q40577"/>
    </source>
</evidence>
<evidence type="ECO:0000269" key="5">
    <source>
    </source>
</evidence>
<evidence type="ECO:0000303" key="6">
    <source>
    </source>
</evidence>
<evidence type="ECO:0000305" key="7"/>
<evidence type="ECO:0000305" key="8">
    <source>
    </source>
</evidence>
<organism>
    <name type="scientific">Talaromyces verruculosus</name>
    <name type="common">Penicillium verruculosum</name>
    <dbReference type="NCBI Taxonomy" id="198730"/>
    <lineage>
        <taxon>Eukaryota</taxon>
        <taxon>Fungi</taxon>
        <taxon>Dikarya</taxon>
        <taxon>Ascomycota</taxon>
        <taxon>Pezizomycotina</taxon>
        <taxon>Eurotiomycetes</taxon>
        <taxon>Eurotiomycetidae</taxon>
        <taxon>Eurotiales</taxon>
        <taxon>Trichocomaceae</taxon>
        <taxon>Talaromyces</taxon>
        <taxon>Talaromyces sect. Talaromyces</taxon>
    </lineage>
</organism>
<accession>P9WER5</accession>
<dbReference type="EC" id="4.2.3.220" evidence="5"/>
<dbReference type="EC" id="2.5.1.158" evidence="5"/>
<dbReference type="EMBL" id="LHCL01000043">
    <property type="protein sequence ID" value="KUL85185.1"/>
    <property type="molecule type" value="Genomic_DNA"/>
</dbReference>
<dbReference type="PDB" id="7VTA">
    <property type="method" value="X-ray"/>
    <property type="resolution" value="2.40 A"/>
    <property type="chains" value="A=1-328"/>
</dbReference>
<dbReference type="PDB" id="7VTB">
    <property type="method" value="X-ray"/>
    <property type="resolution" value="2.00 A"/>
    <property type="chains" value="A=1-328"/>
</dbReference>
<dbReference type="PDBsum" id="7VTA"/>
<dbReference type="PDBsum" id="7VTB"/>
<dbReference type="SMR" id="P9WER5"/>
<dbReference type="KEGG" id="ag:KUL85185"/>
<dbReference type="OrthoDB" id="6921389at2759"/>
<dbReference type="GO" id="GO:0016829">
    <property type="term" value="F:lyase activity"/>
    <property type="evidence" value="ECO:0007669"/>
    <property type="project" value="UniProtKB-KW"/>
</dbReference>
<dbReference type="GO" id="GO:0046872">
    <property type="term" value="F:metal ion binding"/>
    <property type="evidence" value="ECO:0007669"/>
    <property type="project" value="UniProtKB-KW"/>
</dbReference>
<dbReference type="GO" id="GO:0004659">
    <property type="term" value="F:prenyltransferase activity"/>
    <property type="evidence" value="ECO:0007669"/>
    <property type="project" value="InterPro"/>
</dbReference>
<dbReference type="GO" id="GO:0046165">
    <property type="term" value="P:alcohol biosynthetic process"/>
    <property type="evidence" value="ECO:0007669"/>
    <property type="project" value="UniProtKB-ARBA"/>
</dbReference>
<dbReference type="GO" id="GO:0008299">
    <property type="term" value="P:isoprenoid biosynthetic process"/>
    <property type="evidence" value="ECO:0007669"/>
    <property type="project" value="UniProtKB-KW"/>
</dbReference>
<dbReference type="GO" id="GO:0043386">
    <property type="term" value="P:mycotoxin biosynthetic process"/>
    <property type="evidence" value="ECO:0007669"/>
    <property type="project" value="UniProtKB-ARBA"/>
</dbReference>
<dbReference type="Gene3D" id="1.10.600.10">
    <property type="entry name" value="Farnesyl Diphosphate Synthase"/>
    <property type="match status" value="2"/>
</dbReference>
<dbReference type="InterPro" id="IPR008949">
    <property type="entry name" value="Isoprenoid_synthase_dom_sf"/>
</dbReference>
<dbReference type="InterPro" id="IPR000092">
    <property type="entry name" value="Polyprenyl_synt"/>
</dbReference>
<dbReference type="InterPro" id="IPR033749">
    <property type="entry name" value="Polyprenyl_synt_CS"/>
</dbReference>
<dbReference type="PANTHER" id="PTHR12001">
    <property type="entry name" value="GERANYLGERANYL PYROPHOSPHATE SYNTHASE"/>
    <property type="match status" value="1"/>
</dbReference>
<dbReference type="PANTHER" id="PTHR12001:SF72">
    <property type="entry name" value="THIJ_PFPI FAMILY PROTEIN (AFU_ORTHOLOGUE AFUA_3G01210)-RELATED"/>
    <property type="match status" value="1"/>
</dbReference>
<dbReference type="Pfam" id="PF00348">
    <property type="entry name" value="polyprenyl_synt"/>
    <property type="match status" value="1"/>
</dbReference>
<dbReference type="Pfam" id="PF19086">
    <property type="entry name" value="Terpene_syn_C_2"/>
    <property type="match status" value="1"/>
</dbReference>
<dbReference type="SFLD" id="SFLDS00005">
    <property type="entry name" value="Isoprenoid_Synthase_Type_I"/>
    <property type="match status" value="1"/>
</dbReference>
<dbReference type="SUPFAM" id="SSF48576">
    <property type="entry name" value="Terpenoid synthases"/>
    <property type="match status" value="2"/>
</dbReference>
<dbReference type="PROSITE" id="PS00444">
    <property type="entry name" value="POLYPRENYL_SYNTHASE_2"/>
    <property type="match status" value="1"/>
</dbReference>